<sequence length="138" mass="15079">MAKYIPKTGSRKNVRIGSRNHTRKIPKGIIHVQASFNNTIVTITDVRGRVISWSSAGTCGFKGTRRGTPFAAQTAAGNAIRTVSDQGMQRAEIMIKGPGLGRDAALRAIRRSGILLNFIRDVTPMPHNGCRSPKKRRV</sequence>
<keyword id="KW-0150">Chloroplast</keyword>
<keyword id="KW-0934">Plastid</keyword>
<keyword id="KW-0687">Ribonucleoprotein</keyword>
<keyword id="KW-0689">Ribosomal protein</keyword>
<keyword id="KW-0694">RNA-binding</keyword>
<keyword id="KW-0699">rRNA-binding</keyword>
<evidence type="ECO:0000255" key="1">
    <source>
        <dbReference type="HAMAP-Rule" id="MF_01310"/>
    </source>
</evidence>
<evidence type="ECO:0000305" key="2"/>
<dbReference type="EMBL" id="DQ886273">
    <property type="protein sequence ID" value="ABH88118.1"/>
    <property type="molecule type" value="Genomic_DNA"/>
</dbReference>
<dbReference type="EMBL" id="EU196765">
    <property type="protein sequence ID" value="ABW22751.1"/>
    <property type="molecule type" value="Genomic_DNA"/>
</dbReference>
<dbReference type="RefSeq" id="YP_001122839.1">
    <property type="nucleotide sequence ID" value="NC_009259.1"/>
</dbReference>
<dbReference type="SMR" id="A4GGD8"/>
<dbReference type="GeneID" id="4961768"/>
<dbReference type="KEGG" id="pvu:4961768"/>
<dbReference type="eggNOG" id="KOG0408">
    <property type="taxonomic scope" value="Eukaryota"/>
</dbReference>
<dbReference type="GO" id="GO:0009507">
    <property type="term" value="C:chloroplast"/>
    <property type="evidence" value="ECO:0007669"/>
    <property type="project" value="UniProtKB-SubCell"/>
</dbReference>
<dbReference type="GO" id="GO:1990904">
    <property type="term" value="C:ribonucleoprotein complex"/>
    <property type="evidence" value="ECO:0007669"/>
    <property type="project" value="UniProtKB-KW"/>
</dbReference>
<dbReference type="GO" id="GO:0005840">
    <property type="term" value="C:ribosome"/>
    <property type="evidence" value="ECO:0007669"/>
    <property type="project" value="UniProtKB-KW"/>
</dbReference>
<dbReference type="GO" id="GO:0019843">
    <property type="term" value="F:rRNA binding"/>
    <property type="evidence" value="ECO:0007669"/>
    <property type="project" value="UniProtKB-UniRule"/>
</dbReference>
<dbReference type="GO" id="GO:0003735">
    <property type="term" value="F:structural constituent of ribosome"/>
    <property type="evidence" value="ECO:0007669"/>
    <property type="project" value="InterPro"/>
</dbReference>
<dbReference type="GO" id="GO:0006412">
    <property type="term" value="P:translation"/>
    <property type="evidence" value="ECO:0007669"/>
    <property type="project" value="UniProtKB-UniRule"/>
</dbReference>
<dbReference type="FunFam" id="3.30.420.80:FF:000003">
    <property type="entry name" value="30S ribosomal protein S11, chloroplastic"/>
    <property type="match status" value="1"/>
</dbReference>
<dbReference type="Gene3D" id="3.30.420.80">
    <property type="entry name" value="Ribosomal protein S11"/>
    <property type="match status" value="1"/>
</dbReference>
<dbReference type="HAMAP" id="MF_01310">
    <property type="entry name" value="Ribosomal_uS11"/>
    <property type="match status" value="1"/>
</dbReference>
<dbReference type="InterPro" id="IPR001971">
    <property type="entry name" value="Ribosomal_uS11"/>
</dbReference>
<dbReference type="InterPro" id="IPR019981">
    <property type="entry name" value="Ribosomal_uS11_bac-type"/>
</dbReference>
<dbReference type="InterPro" id="IPR018102">
    <property type="entry name" value="Ribosomal_uS11_CS"/>
</dbReference>
<dbReference type="InterPro" id="IPR036967">
    <property type="entry name" value="Ribosomal_uS11_sf"/>
</dbReference>
<dbReference type="NCBIfam" id="NF003698">
    <property type="entry name" value="PRK05309.1"/>
    <property type="match status" value="1"/>
</dbReference>
<dbReference type="NCBIfam" id="TIGR03632">
    <property type="entry name" value="uS11_bact"/>
    <property type="match status" value="1"/>
</dbReference>
<dbReference type="PANTHER" id="PTHR11759">
    <property type="entry name" value="40S RIBOSOMAL PROTEIN S14/30S RIBOSOMAL PROTEIN S11"/>
    <property type="match status" value="1"/>
</dbReference>
<dbReference type="Pfam" id="PF00411">
    <property type="entry name" value="Ribosomal_S11"/>
    <property type="match status" value="1"/>
</dbReference>
<dbReference type="PIRSF" id="PIRSF002131">
    <property type="entry name" value="Ribosomal_S11"/>
    <property type="match status" value="1"/>
</dbReference>
<dbReference type="SUPFAM" id="SSF53137">
    <property type="entry name" value="Translational machinery components"/>
    <property type="match status" value="1"/>
</dbReference>
<dbReference type="PROSITE" id="PS00054">
    <property type="entry name" value="RIBOSOMAL_S11"/>
    <property type="match status" value="1"/>
</dbReference>
<reference key="1">
    <citation type="journal article" date="2007" name="BMC Genomics">
        <title>Rapid evolutionary change of common bean (Phaseolus vulgaris L) plastome, and the genomic diversification of legume chloroplasts.</title>
        <authorList>
            <person name="Guo X."/>
            <person name="Castillo-Ramirez S."/>
            <person name="Gonzalez V."/>
            <person name="Bustos P."/>
            <person name="Fernandez-Vazquez J.L."/>
            <person name="Santamaria R.I."/>
            <person name="Arellano J."/>
            <person name="Cevallos M.A."/>
            <person name="Davila G."/>
        </authorList>
    </citation>
    <scope>NUCLEOTIDE SEQUENCE [LARGE SCALE GENOMIC DNA]</scope>
    <source>
        <strain>cv. Negro Jamapa</strain>
    </source>
</reference>
<reference key="2">
    <citation type="submission" date="2007-10" db="EMBL/GenBank/DDBJ databases">
        <title>Complete nucleotide sequence of the plastid genome of the common bean, Phaseolus vulgaris.</title>
        <authorList>
            <person name="Moore M.J."/>
            <person name="Triplett E.W."/>
            <person name="Broughton W.J."/>
            <person name="Soltis P.S."/>
            <person name="Soltis D.E."/>
        </authorList>
    </citation>
    <scope>NUCLEOTIDE SEQUENCE [LARGE SCALE GENOMIC DNA]</scope>
</reference>
<feature type="chain" id="PRO_0000294924" description="Small ribosomal subunit protein uS11c">
    <location>
        <begin position="1"/>
        <end position="138"/>
    </location>
</feature>
<comment type="subunit">
    <text evidence="1">Part of the 30S ribosomal subunit.</text>
</comment>
<comment type="subcellular location">
    <subcellularLocation>
        <location>Plastid</location>
        <location>Chloroplast</location>
    </subcellularLocation>
</comment>
<comment type="similarity">
    <text evidence="1">Belongs to the universal ribosomal protein uS11 family.</text>
</comment>
<protein>
    <recommendedName>
        <fullName evidence="1">Small ribosomal subunit protein uS11c</fullName>
    </recommendedName>
    <alternativeName>
        <fullName evidence="2">30S ribosomal protein S11, chloroplastic</fullName>
    </alternativeName>
</protein>
<accession>A4GGD8</accession>
<accession>A8W7X9</accession>
<geneLocation type="chloroplast"/>
<proteinExistence type="inferred from homology"/>
<name>RR11_PHAVU</name>
<organism>
    <name type="scientific">Phaseolus vulgaris</name>
    <name type="common">Kidney bean</name>
    <name type="synonym">French bean</name>
    <dbReference type="NCBI Taxonomy" id="3885"/>
    <lineage>
        <taxon>Eukaryota</taxon>
        <taxon>Viridiplantae</taxon>
        <taxon>Streptophyta</taxon>
        <taxon>Embryophyta</taxon>
        <taxon>Tracheophyta</taxon>
        <taxon>Spermatophyta</taxon>
        <taxon>Magnoliopsida</taxon>
        <taxon>eudicotyledons</taxon>
        <taxon>Gunneridae</taxon>
        <taxon>Pentapetalae</taxon>
        <taxon>rosids</taxon>
        <taxon>fabids</taxon>
        <taxon>Fabales</taxon>
        <taxon>Fabaceae</taxon>
        <taxon>Papilionoideae</taxon>
        <taxon>50 kb inversion clade</taxon>
        <taxon>NPAAA clade</taxon>
        <taxon>indigoferoid/millettioid clade</taxon>
        <taxon>Phaseoleae</taxon>
        <taxon>Phaseolus</taxon>
    </lineage>
</organism>
<gene>
    <name evidence="1" type="primary">rps11</name>
</gene>